<comment type="function">
    <text evidence="2 3">Involved in the ethylmalonyl-CoA pathway for acetate assimilation. Catalyzes the reversible hydration of mesaconyl-CoA (2-methylfumaryl-CoA) to yield beta-methylmalyl-CoA ((2R,3S)-beta-methylmalyl-CoA).</text>
</comment>
<comment type="catalytic activity">
    <reaction evidence="3">
        <text>(2R,3S)-beta-methylmalyl-CoA = 2-methylfumaryl-CoA + H2O</text>
        <dbReference type="Rhea" id="RHEA:38263"/>
        <dbReference type="ChEBI" id="CHEBI:15377"/>
        <dbReference type="ChEBI" id="CHEBI:75634"/>
        <dbReference type="ChEBI" id="CHEBI:75635"/>
        <dbReference type="EC" id="4.2.1.148"/>
    </reaction>
</comment>
<comment type="biophysicochemical properties">
    <phDependence>
        <text evidence="3">Optimum pH is 7.5.</text>
    </phDependence>
</comment>
<comment type="induction">
    <text evidence="2">Strongly up-regulated during growth on acetate as sole carbon source.</text>
</comment>
<comment type="disruption phenotype">
    <text evidence="2">Cells lacking this gene are not able to grow on acetate as a sole carbon source.</text>
</comment>
<gene>
    <name type="primary">mch</name>
    <name evidence="4" type="ordered locus">RHOS4_25880</name>
    <name evidence="5" type="ORF">RSP_0973</name>
</gene>
<sequence>MKTNAGRFFEDYRLGETIAHAVPRTVSGGERALYHALYPARHALSSSDEFARACGLPAAPVDELMAFHLVFGKTVPDISLNAVANLGYAEGRWLKPVFPGDTLRAESTVIGLKENSNGASGVVWVRTRGLNQQGEAVLSYVRWVMVRKRDTAAPAPAPTVPELAGSVAASDLVIPEGLSFTDYDLTLAGEPHRWGDYAVGEKIDHVDGVTVEESEHMLATRLWQNTAKVHFDATNRPDGRRLIYGGHVISLARTLSFNGLANAQMIVALNAGAHANPCFAGDTVRAWSEVLDKAETADPGVGALRLRLVAMKHGTEPFVTRSEDGKYLPGVLLDLDYWALVPR</sequence>
<feature type="chain" id="PRO_0000429582" description="Mesaconyl-CoA hydratase">
    <location>
        <begin position="1"/>
        <end position="343"/>
    </location>
</feature>
<feature type="domain" description="MaoC-like">
    <location>
        <begin position="47"/>
        <end position="116"/>
    </location>
</feature>
<feature type="binding site" evidence="1">
    <location>
        <begin position="60"/>
        <end position="63"/>
    </location>
    <ligand>
        <name>substrate</name>
    </ligand>
</feature>
<feature type="binding site" evidence="1">
    <location>
        <begin position="83"/>
        <end position="86"/>
    </location>
    <ligand>
        <name>substrate</name>
    </ligand>
</feature>
<feature type="binding site" evidence="1">
    <location>
        <begin position="94"/>
        <end position="96"/>
    </location>
    <ligand>
        <name>substrate</name>
    </ligand>
</feature>
<evidence type="ECO:0000250" key="1"/>
<evidence type="ECO:0000269" key="2">
    <source>
    </source>
</evidence>
<evidence type="ECO:0000269" key="3">
    <source>
    </source>
</evidence>
<evidence type="ECO:0000305" key="4"/>
<evidence type="ECO:0000312" key="5">
    <source>
        <dbReference type="EMBL" id="ABA80156.1"/>
    </source>
</evidence>
<organism>
    <name type="scientific">Cereibacter sphaeroides (strain ATCC 17023 / DSM 158 / JCM 6121 / CCUG 31486 / LMG 2827 / NBRC 12203 / NCIMB 8253 / ATH 2.4.1.)</name>
    <name type="common">Rhodobacter sphaeroides</name>
    <dbReference type="NCBI Taxonomy" id="272943"/>
    <lineage>
        <taxon>Bacteria</taxon>
        <taxon>Pseudomonadati</taxon>
        <taxon>Pseudomonadota</taxon>
        <taxon>Alphaproteobacteria</taxon>
        <taxon>Rhodobacterales</taxon>
        <taxon>Paracoccaceae</taxon>
        <taxon>Cereibacter</taxon>
    </lineage>
</organism>
<name>MCH_CERS4</name>
<keyword id="KW-0456">Lyase</keyword>
<keyword id="KW-1185">Reference proteome</keyword>
<dbReference type="EC" id="4.2.1.148"/>
<dbReference type="EMBL" id="CP000143">
    <property type="protein sequence ID" value="ABA80156.1"/>
    <property type="molecule type" value="Genomic_DNA"/>
</dbReference>
<dbReference type="RefSeq" id="WP_011338635.1">
    <property type="nucleotide sequence ID" value="NC_007493.2"/>
</dbReference>
<dbReference type="RefSeq" id="YP_354057.1">
    <property type="nucleotide sequence ID" value="NC_007493.2"/>
</dbReference>
<dbReference type="SMR" id="Q3IZ78"/>
<dbReference type="STRING" id="272943.RSP_0973"/>
<dbReference type="EnsemblBacteria" id="ABA80156">
    <property type="protein sequence ID" value="ABA80156"/>
    <property type="gene ID" value="RSP_0973"/>
</dbReference>
<dbReference type="GeneID" id="3720726"/>
<dbReference type="KEGG" id="rsp:RSP_0973"/>
<dbReference type="PATRIC" id="fig|272943.9.peg.2945"/>
<dbReference type="eggNOG" id="COG2030">
    <property type="taxonomic scope" value="Bacteria"/>
</dbReference>
<dbReference type="OrthoDB" id="9796589at2"/>
<dbReference type="PhylomeDB" id="Q3IZ78"/>
<dbReference type="BioCyc" id="MetaCyc:MONOMER-13587"/>
<dbReference type="Proteomes" id="UP000002703">
    <property type="component" value="Chromosome 1"/>
</dbReference>
<dbReference type="GO" id="GO:0016833">
    <property type="term" value="F:oxo-acid-lyase activity"/>
    <property type="evidence" value="ECO:0000314"/>
    <property type="project" value="UniProtKB"/>
</dbReference>
<dbReference type="GO" id="GO:0045733">
    <property type="term" value="P:acetate catabolic process"/>
    <property type="evidence" value="ECO:0000314"/>
    <property type="project" value="UniProtKB"/>
</dbReference>
<dbReference type="CDD" id="cd03451">
    <property type="entry name" value="FkbR2"/>
    <property type="match status" value="2"/>
</dbReference>
<dbReference type="FunFam" id="3.10.129.10:FF:000175">
    <property type="entry name" value="Mesaconyl-CoA hydratase"/>
    <property type="match status" value="1"/>
</dbReference>
<dbReference type="Gene3D" id="3.10.129.10">
    <property type="entry name" value="Hotdog Thioesterase"/>
    <property type="match status" value="1"/>
</dbReference>
<dbReference type="InterPro" id="IPR029069">
    <property type="entry name" value="HotDog_dom_sf"/>
</dbReference>
<dbReference type="InterPro" id="IPR048274">
    <property type="entry name" value="MC_hydratase"/>
</dbReference>
<dbReference type="InterPro" id="IPR052342">
    <property type="entry name" value="MCH/BMMD"/>
</dbReference>
<dbReference type="InterPro" id="IPR016790">
    <property type="entry name" value="Thiol_ester_hydratase_Rv0216"/>
</dbReference>
<dbReference type="PANTHER" id="PTHR43664:SF1">
    <property type="entry name" value="BETA-METHYLMALYL-COA DEHYDRATASE"/>
    <property type="match status" value="1"/>
</dbReference>
<dbReference type="PANTHER" id="PTHR43664">
    <property type="entry name" value="MONOAMINE OXIDASE-RELATED"/>
    <property type="match status" value="1"/>
</dbReference>
<dbReference type="Pfam" id="PF19315">
    <property type="entry name" value="MC_hydratase"/>
    <property type="match status" value="1"/>
</dbReference>
<dbReference type="PIRSF" id="PIRSF021494">
    <property type="entry name" value="Rv0216_prd"/>
    <property type="match status" value="1"/>
</dbReference>
<dbReference type="SUPFAM" id="SSF54637">
    <property type="entry name" value="Thioesterase/thiol ester dehydrase-isomerase"/>
    <property type="match status" value="2"/>
</dbReference>
<reference key="1">
    <citation type="submission" date="2005-09" db="EMBL/GenBank/DDBJ databases">
        <title>Complete sequence of chromosome 1 of Rhodobacter sphaeroides 2.4.1.</title>
        <authorList>
            <person name="Copeland A."/>
            <person name="Lucas S."/>
            <person name="Lapidus A."/>
            <person name="Barry K."/>
            <person name="Detter J.C."/>
            <person name="Glavina T."/>
            <person name="Hammon N."/>
            <person name="Israni S."/>
            <person name="Pitluck S."/>
            <person name="Richardson P."/>
            <person name="Mackenzie C."/>
            <person name="Choudhary M."/>
            <person name="Larimer F."/>
            <person name="Hauser L.J."/>
            <person name="Land M."/>
            <person name="Donohue T.J."/>
            <person name="Kaplan S."/>
        </authorList>
    </citation>
    <scope>NUCLEOTIDE SEQUENCE [LARGE SCALE GENOMIC DNA]</scope>
    <source>
        <strain>ATCC 17023 / DSM 158 / JCM 6121 / CCUG 31486 / LMG 2827 / NBRC 12203 / NCIMB 8253 / ATH 2.4.1.</strain>
    </source>
</reference>
<reference key="2">
    <citation type="journal article" date="2006" name="Mol. Microbiol.">
        <title>Study of an alternate glyoxylate cycle for acetate assimilation by Rhodobacter sphaeroides.</title>
        <authorList>
            <person name="Alber B.E."/>
            <person name="Spanheimer R."/>
            <person name="Ebenau-Jehle C."/>
            <person name="Fuchs G."/>
        </authorList>
    </citation>
    <scope>FUNCTION</scope>
    <scope>DISRUPTION PHENOTYPE</scope>
    <scope>INDUCTION</scope>
    <source>
        <strain>ATCC 17023 / DSM 158 / JCM 6121 / CCUG 31486 / LMG 2827 / NBRC 12203 / NCIMB 8253 / ATH 2.4.1.</strain>
    </source>
</reference>
<reference key="3">
    <citation type="journal article" date="2008" name="J. Bacteriol.">
        <title>Mesaconyl-coenzyme A hydratase, a new enzyme of two central carbon metabolic pathways in bacteria.</title>
        <authorList>
            <person name="Zarzycki J."/>
            <person name="Schlichting A."/>
            <person name="Strychalsky N."/>
            <person name="Muller M."/>
            <person name="Alber B.E."/>
            <person name="Fuchs G."/>
        </authorList>
    </citation>
    <scope>FUNCTION</scope>
    <scope>CATALYTIC ACTIVITY</scope>
    <scope>BIOPHYSICOCHEMICAL PROPERTIES</scope>
    <scope>SUBUNIT</scope>
    <source>
        <strain>ATCC 17023 / DSM 158 / JCM 6121 / CCUG 31486 / LMG 2827 / NBRC 12203 / NCIMB 8253 / ATH 2.4.1.</strain>
    </source>
</reference>
<protein>
    <recommendedName>
        <fullName>Mesaconyl-CoA hydratase</fullName>
        <ecNumber>4.2.1.148</ecNumber>
    </recommendedName>
    <alternativeName>
        <fullName>2-methylfumaryl-CoA hydratase</fullName>
    </alternativeName>
    <alternativeName>
        <fullName>Beta-methylmalyl-CoA dehydratase</fullName>
    </alternativeName>
</protein>
<accession>Q3IZ78</accession>
<proteinExistence type="evidence at protein level"/>